<organism>
    <name type="scientific">Methanocaldococcus jannaschii (strain ATCC 43067 / DSM 2661 / JAL-1 / JCM 10045 / NBRC 100440)</name>
    <name type="common">Methanococcus jannaschii</name>
    <dbReference type="NCBI Taxonomy" id="243232"/>
    <lineage>
        <taxon>Archaea</taxon>
        <taxon>Methanobacteriati</taxon>
        <taxon>Methanobacteriota</taxon>
        <taxon>Methanomada group</taxon>
        <taxon>Methanococci</taxon>
        <taxon>Methanococcales</taxon>
        <taxon>Methanocaldococcaceae</taxon>
        <taxon>Methanocaldococcus</taxon>
    </lineage>
</organism>
<sequence>MDKNEFLKKLDEKFKESEQKNLEALEKIRSNLPQLEIEIFGEKLTAIIPPLSVEKEMIEDAKNLEPLDFALKYIPILYGIPKEKVEELPSIVIAELIKKYFEAYKQLNKDKSFRNRVGTK</sequence>
<feature type="chain" id="PRO_0000106811" description="Uncharacterized protein MJ0341">
    <location>
        <begin position="1"/>
        <end position="120"/>
    </location>
</feature>
<dbReference type="EMBL" id="L77117">
    <property type="protein sequence ID" value="AAB98329.1"/>
    <property type="molecule type" value="Genomic_DNA"/>
</dbReference>
<dbReference type="PIR" id="E64342">
    <property type="entry name" value="E64342"/>
</dbReference>
<dbReference type="RefSeq" id="WP_010869839.1">
    <property type="nucleotide sequence ID" value="NC_000909.1"/>
</dbReference>
<dbReference type="SMR" id="Q57787"/>
<dbReference type="FunCoup" id="Q57787">
    <property type="interactions" value="9"/>
</dbReference>
<dbReference type="STRING" id="243232.MJ_0341"/>
<dbReference type="PaxDb" id="243232-MJ_0341"/>
<dbReference type="EnsemblBacteria" id="AAB98329">
    <property type="protein sequence ID" value="AAB98329"/>
    <property type="gene ID" value="MJ_0341"/>
</dbReference>
<dbReference type="GeneID" id="1451197"/>
<dbReference type="KEGG" id="mja:MJ_0341"/>
<dbReference type="eggNOG" id="arCOG09646">
    <property type="taxonomic scope" value="Archaea"/>
</dbReference>
<dbReference type="HOGENOM" id="CLU_2044424_0_0_2"/>
<dbReference type="InParanoid" id="Q57787"/>
<dbReference type="OrthoDB" id="374643at2157"/>
<dbReference type="Proteomes" id="UP000000805">
    <property type="component" value="Chromosome"/>
</dbReference>
<reference key="1">
    <citation type="journal article" date="1996" name="Science">
        <title>Complete genome sequence of the methanogenic archaeon, Methanococcus jannaschii.</title>
        <authorList>
            <person name="Bult C.J."/>
            <person name="White O."/>
            <person name="Olsen G.J."/>
            <person name="Zhou L."/>
            <person name="Fleischmann R.D."/>
            <person name="Sutton G.G."/>
            <person name="Blake J.A."/>
            <person name="FitzGerald L.M."/>
            <person name="Clayton R.A."/>
            <person name="Gocayne J.D."/>
            <person name="Kerlavage A.R."/>
            <person name="Dougherty B.A."/>
            <person name="Tomb J.-F."/>
            <person name="Adams M.D."/>
            <person name="Reich C.I."/>
            <person name="Overbeek R."/>
            <person name="Kirkness E.F."/>
            <person name="Weinstock K.G."/>
            <person name="Merrick J.M."/>
            <person name="Glodek A."/>
            <person name="Scott J.L."/>
            <person name="Geoghagen N.S.M."/>
            <person name="Weidman J.F."/>
            <person name="Fuhrmann J.L."/>
            <person name="Nguyen D."/>
            <person name="Utterback T.R."/>
            <person name="Kelley J.M."/>
            <person name="Peterson J.D."/>
            <person name="Sadow P.W."/>
            <person name="Hanna M.C."/>
            <person name="Cotton M.D."/>
            <person name="Roberts K.M."/>
            <person name="Hurst M.A."/>
            <person name="Kaine B.P."/>
            <person name="Borodovsky M."/>
            <person name="Klenk H.-P."/>
            <person name="Fraser C.M."/>
            <person name="Smith H.O."/>
            <person name="Woese C.R."/>
            <person name="Venter J.C."/>
        </authorList>
    </citation>
    <scope>NUCLEOTIDE SEQUENCE [LARGE SCALE GENOMIC DNA]</scope>
    <source>
        <strain>ATCC 43067 / DSM 2661 / JAL-1 / JCM 10045 / NBRC 100440</strain>
    </source>
</reference>
<accession>Q57787</accession>
<gene>
    <name type="ordered locus">MJ0341</name>
</gene>
<proteinExistence type="predicted"/>
<protein>
    <recommendedName>
        <fullName>Uncharacterized protein MJ0341</fullName>
    </recommendedName>
</protein>
<keyword id="KW-1185">Reference proteome</keyword>
<name>Y341_METJA</name>